<protein>
    <recommendedName>
        <fullName>Uncharacterized protein Rv3785</fullName>
    </recommendedName>
</protein>
<accession>P9WKX1</accession>
<accession>L0TDS6</accession>
<accession>P65093</accession>
<accession>P72051</accession>
<reference key="1">
    <citation type="journal article" date="1998" name="Nature">
        <title>Deciphering the biology of Mycobacterium tuberculosis from the complete genome sequence.</title>
        <authorList>
            <person name="Cole S.T."/>
            <person name="Brosch R."/>
            <person name="Parkhill J."/>
            <person name="Garnier T."/>
            <person name="Churcher C.M."/>
            <person name="Harris D.E."/>
            <person name="Gordon S.V."/>
            <person name="Eiglmeier K."/>
            <person name="Gas S."/>
            <person name="Barry C.E. III"/>
            <person name="Tekaia F."/>
            <person name="Badcock K."/>
            <person name="Basham D."/>
            <person name="Brown D."/>
            <person name="Chillingworth T."/>
            <person name="Connor R."/>
            <person name="Davies R.M."/>
            <person name="Devlin K."/>
            <person name="Feltwell T."/>
            <person name="Gentles S."/>
            <person name="Hamlin N."/>
            <person name="Holroyd S."/>
            <person name="Hornsby T."/>
            <person name="Jagels K."/>
            <person name="Krogh A."/>
            <person name="McLean J."/>
            <person name="Moule S."/>
            <person name="Murphy L.D."/>
            <person name="Oliver S."/>
            <person name="Osborne J."/>
            <person name="Quail M.A."/>
            <person name="Rajandream M.A."/>
            <person name="Rogers J."/>
            <person name="Rutter S."/>
            <person name="Seeger K."/>
            <person name="Skelton S."/>
            <person name="Squares S."/>
            <person name="Squares R."/>
            <person name="Sulston J.E."/>
            <person name="Taylor K."/>
            <person name="Whitehead S."/>
            <person name="Barrell B.G."/>
        </authorList>
    </citation>
    <scope>NUCLEOTIDE SEQUENCE [LARGE SCALE GENOMIC DNA]</scope>
    <source>
        <strain>ATCC 25618 / H37Rv</strain>
    </source>
</reference>
<name>Y3785_MYCTU</name>
<feature type="chain" id="PRO_0000104148" description="Uncharacterized protein Rv3785">
    <location>
        <begin position="1"/>
        <end position="357"/>
    </location>
</feature>
<organism>
    <name type="scientific">Mycobacterium tuberculosis (strain ATCC 25618 / H37Rv)</name>
    <dbReference type="NCBI Taxonomy" id="83332"/>
    <lineage>
        <taxon>Bacteria</taxon>
        <taxon>Bacillati</taxon>
        <taxon>Actinomycetota</taxon>
        <taxon>Actinomycetes</taxon>
        <taxon>Mycobacteriales</taxon>
        <taxon>Mycobacteriaceae</taxon>
        <taxon>Mycobacterium</taxon>
        <taxon>Mycobacterium tuberculosis complex</taxon>
    </lineage>
</organism>
<keyword id="KW-1185">Reference proteome</keyword>
<dbReference type="EMBL" id="AL123456">
    <property type="protein sequence ID" value="CCP46614.1"/>
    <property type="molecule type" value="Genomic_DNA"/>
</dbReference>
<dbReference type="PIR" id="E70696">
    <property type="entry name" value="E70696"/>
</dbReference>
<dbReference type="RefSeq" id="NP_218302.1">
    <property type="nucleotide sequence ID" value="NC_000962.3"/>
</dbReference>
<dbReference type="RefSeq" id="WP_003420615.1">
    <property type="nucleotide sequence ID" value="NZ_KK339374.1"/>
</dbReference>
<dbReference type="STRING" id="83332.Rv3785"/>
<dbReference type="PaxDb" id="83332-Rv3785"/>
<dbReference type="DNASU" id="886119"/>
<dbReference type="GeneID" id="886119"/>
<dbReference type="KEGG" id="mtu:Rv3785"/>
<dbReference type="KEGG" id="mtv:RVBD_3785"/>
<dbReference type="PATRIC" id="fig|83332.111.peg.4209"/>
<dbReference type="TubercuList" id="Rv3785"/>
<dbReference type="eggNOG" id="ENOG50330A6">
    <property type="taxonomic scope" value="Bacteria"/>
</dbReference>
<dbReference type="InParanoid" id="P9WKX1"/>
<dbReference type="OrthoDB" id="4683304at2"/>
<dbReference type="Proteomes" id="UP000001584">
    <property type="component" value="Chromosome"/>
</dbReference>
<dbReference type="GO" id="GO:0005829">
    <property type="term" value="C:cytosol"/>
    <property type="evidence" value="ECO:0007005"/>
    <property type="project" value="MTBBASE"/>
</dbReference>
<gene>
    <name type="ordered locus">Rv3785</name>
    <name type="ORF">MTCY13D12.19</name>
</gene>
<proteinExistence type="predicted"/>
<sequence length="357" mass="38931">MVTVARRPVCPVTLTPGDPALASVRDLVDAWSAHDALAELVTMFGGAFPQTDHLEARLASLDKFSTAWDYRARARAARALHGEPVRCQDSGGGARWLIPRLDLPAKKRDAIVGLAQQLGLTLESTPQGTTFDHVLVIGTGRHSNLIRARWARELAKGRQVGHIVLAAASRRLLPSEDDAVAVCAPGARTEFELLAAAARDAFGLDVHPAVRYVRQRDDNPHRDSMVWRFAADTNDLGVPITLLEAPSPEPDSSRATSADTFTFTAHTLGMQDSTCLLVTGQPFVPYQNFDALRTLALPFGIQVETVGFGIDRYDGLGELDQQHPAKLLQEVRSTIRAARALLERIEAGERMATDPRR</sequence>